<sequence length="845" mass="92975">MSSRRWFHPTISGIEAEKLLQEQGFDGSFLARLSSSNPGAFTLSVRRGNEVTHIKIQNNGDFFDLYGGEKFATLPELVQYYMENGELKEKNGQAIELKQPLICAEPTTERWFHGNLSGKEAEKLILERGKNGSFLVRESQSKPGDFVLSVRTDDKVTHVMIRWQDKKYDVGGGESFGTLSELIDHYKRNPMVETCGTVVHLRQPFNATRITAAGINARVEQLVKGGFWEEFESLQQDSRDTFSRNEGYKQENRLKNRYRNILPYDHTRVKLLDVEHSVAGAEYINANYIRLPTDGDLYNMSSSSESLNSSVPSCPACTAAQTQRNCSNCQLQNKTCVQCAVKSAILPYSNCATCSRKSDSLSKHKRSESSASSSPSSGSGSGPGSSGTSGVSSVNGPGTPTNLTSGTAGCLVGLLKRHSNDSSGAVSISMAEREREREREMFKTYIATQGCLLTQQVNTVTDFWNMVWQENTRVIVMTTKEYERGKEKCARYWPDEGRSEQFGHARIQCVSENSTSDYTLREFLVSWRDQPARRIFHYHFQVWPDHGVPADPGCVLNFLQDVNTRQSHLAQAGEKPGPICVHCSAGIGRTGTFIVIDMILDQIVRNGLDTEIDIQRTIQMVRSQRSGLVQTEAQYKFVYYAVQHYIQTLIARKRAEEQSLQVGREYTNIKYTGEIGNDSQRSPLPPAISSISLVPSKTPLTPTSADLGTGMGLSMGVGMGVGNKHASKQQPPLPVVNCNNNNNGIGNSGCSNGGGSSTTSSSNGSSNGNINALLGGIGLGLGGNMRKSNFYSDSLKQQQQREEQAPAGAGKMQQPAPPLRPRPGILKLLTSPVIFQQNSKTFPKT</sequence>
<protein>
    <recommendedName>
        <fullName>Tyrosine-protein phosphatase corkscrew</fullName>
        <ecNumber>3.1.3.48</ecNumber>
    </recommendedName>
</protein>
<feature type="chain" id="PRO_0000094850" description="Tyrosine-protein phosphatase corkscrew">
    <location>
        <begin position="1"/>
        <end position="845"/>
    </location>
</feature>
<feature type="domain" description="SH2 1" evidence="3">
    <location>
        <begin position="6"/>
        <end position="101"/>
    </location>
</feature>
<feature type="domain" description="SH2 2" evidence="3">
    <location>
        <begin position="111"/>
        <end position="205"/>
    </location>
</feature>
<feature type="domain" description="Tyrosine-protein phosphatase" evidence="2">
    <location>
        <begin position="227"/>
        <end position="645"/>
    </location>
</feature>
<feature type="region of interest" description="PTPase insert (Cys/Ser-rich)">
    <location>
        <begin position="289"/>
        <end position="444"/>
    </location>
</feature>
<feature type="region of interest" description="Disordered" evidence="5">
    <location>
        <begin position="362"/>
        <end position="402"/>
    </location>
</feature>
<feature type="region of interest" description="Disordered" evidence="5">
    <location>
        <begin position="793"/>
        <end position="824"/>
    </location>
</feature>
<feature type="compositionally biased region" description="Low complexity" evidence="5">
    <location>
        <begin position="369"/>
        <end position="378"/>
    </location>
</feature>
<feature type="compositionally biased region" description="Low complexity" evidence="5">
    <location>
        <begin position="388"/>
        <end position="400"/>
    </location>
</feature>
<feature type="active site" description="Phosphocysteine intermediate" evidence="2 4">
    <location>
        <position position="583"/>
    </location>
</feature>
<feature type="binding site" evidence="1">
    <location>
        <position position="545"/>
    </location>
    <ligand>
        <name>substrate</name>
    </ligand>
</feature>
<feature type="binding site" evidence="1">
    <location>
        <begin position="583"/>
        <end position="589"/>
    </location>
    <ligand>
        <name>substrate</name>
    </ligand>
</feature>
<feature type="binding site" evidence="1">
    <location>
        <position position="630"/>
    </location>
    <ligand>
        <name>substrate</name>
    </ligand>
</feature>
<feature type="modified residue" description="Phosphoserine" evidence="8">
    <location>
        <position position="419"/>
    </location>
</feature>
<feature type="splice variant" id="VSP_005139" description="In isoform 3." evidence="13">
    <location>
        <begin position="1"/>
        <end position="159"/>
    </location>
</feature>
<feature type="splice variant" id="VSP_005140" description="In isoform 4." evidence="13">
    <original>MSSRRWFHPTISGIEAEKLLQEQGFDGSFLARLSSSNPGAFTLSVRRGNEVTHIKIQNNGDFFDLYGGEKFATLPELVQYYMENGELKEKNGQAIELKQPLICAEPTTER</original>
    <variation>MLFNKCLEKLSSSLGNVVNHKLQEKQVYNNNNINNNNNNTLNNNNAYNNQRNFEYERAIQAHYGSKGRRSEERERSGKFKASKGRKAKVTPPTETPEAQEPACKNCMTHDELAQIIKGVAKGADAQRNRDNRLQRRRRPLSAQPSAAASASTSTESLHRLTPSPQASYPATPTSWTATPPQFPAAFGGASCSNSTLSLLATMRVQLHGYT</variation>
    <location>
        <begin position="1"/>
        <end position="110"/>
    </location>
</feature>
<feature type="splice variant" id="VSP_005141" description="In isoform 1 and isoform 3." evidence="11 12">
    <original>GKMQQPAPPLRPRPGILKLLTSPVIFQQNSKTFPKT</original>
    <variation>AKFKNIPKDMIGLRPPSHAPALPPPPTPPRKT</variation>
    <location>
        <begin position="810"/>
        <end position="845"/>
    </location>
</feature>
<feature type="sequence variant" description="In strain: Kenya-HLa3, Kenya-HLa6, Kakamega-b1 and Makindu-b1." evidence="6">
    <original>K</original>
    <variation>T</variation>
    <location>
        <position position="119"/>
    </location>
</feature>
<feature type="sequence variant" description="In strain: Ann Arbor1, DP CN BW, Kakamega-b1, Kakamega-b3, Kakamega-b4, Kenya-HLa3, Kenya-HLa6, Makindu-b5 and Reids2." evidence="6">
    <original>G</original>
    <variation>S</variation>
    <location>
        <position position="749"/>
    </location>
</feature>
<feature type="sequence conflict" description="In Ref. 2; AAB02544." evidence="13" ref="2">
    <original>P</original>
    <variation>S</variation>
    <location>
        <position position="815"/>
    </location>
</feature>
<name>CSW_DROME</name>
<dbReference type="EC" id="3.1.3.48"/>
<dbReference type="EMBL" id="M94730">
    <property type="protein sequence ID" value="AAA28433.1"/>
    <property type="molecule type" value="mRNA"/>
</dbReference>
<dbReference type="EMBL" id="U19909">
    <property type="protein sequence ID" value="AAB02543.1"/>
    <property type="molecule type" value="Genomic_DNA"/>
</dbReference>
<dbReference type="EMBL" id="U19909">
    <property type="protein sequence ID" value="AAB02544.1"/>
    <property type="molecule type" value="Genomic_DNA"/>
</dbReference>
<dbReference type="EMBL" id="AY135117">
    <property type="protein sequence ID" value="AAN17607.1"/>
    <property type="molecule type" value="Genomic_DNA"/>
</dbReference>
<dbReference type="EMBL" id="AY135117">
    <property type="protein sequence ID" value="AAN17608.1"/>
    <property type="molecule type" value="Genomic_DNA"/>
</dbReference>
<dbReference type="EMBL" id="AY135118">
    <property type="protein sequence ID" value="AAN17609.1"/>
    <property type="molecule type" value="Genomic_DNA"/>
</dbReference>
<dbReference type="EMBL" id="AY135118">
    <property type="protein sequence ID" value="AAN17610.1"/>
    <property type="molecule type" value="Genomic_DNA"/>
</dbReference>
<dbReference type="EMBL" id="AY135119">
    <property type="protein sequence ID" value="AAN17611.1"/>
    <property type="molecule type" value="Genomic_DNA"/>
</dbReference>
<dbReference type="EMBL" id="AY135119">
    <property type="protein sequence ID" value="AAN17612.1"/>
    <property type="molecule type" value="Genomic_DNA"/>
</dbReference>
<dbReference type="EMBL" id="AY135120">
    <property type="protein sequence ID" value="AAN17613.1"/>
    <property type="molecule type" value="Genomic_DNA"/>
</dbReference>
<dbReference type="EMBL" id="AY135120">
    <property type="protein sequence ID" value="AAN17614.1"/>
    <property type="molecule type" value="Genomic_DNA"/>
</dbReference>
<dbReference type="EMBL" id="AY135121">
    <property type="protein sequence ID" value="AAN17615.1"/>
    <property type="molecule type" value="Genomic_DNA"/>
</dbReference>
<dbReference type="EMBL" id="AY135121">
    <property type="protein sequence ID" value="AAN17616.1"/>
    <property type="molecule type" value="Genomic_DNA"/>
</dbReference>
<dbReference type="EMBL" id="AY135122">
    <property type="protein sequence ID" value="AAN17617.1"/>
    <property type="molecule type" value="Genomic_DNA"/>
</dbReference>
<dbReference type="EMBL" id="AY135122">
    <property type="protein sequence ID" value="AAN17618.1"/>
    <property type="molecule type" value="Genomic_DNA"/>
</dbReference>
<dbReference type="EMBL" id="AY135123">
    <property type="protein sequence ID" value="AAN17619.1"/>
    <property type="molecule type" value="Genomic_DNA"/>
</dbReference>
<dbReference type="EMBL" id="AY135123">
    <property type="protein sequence ID" value="AAN17620.1"/>
    <property type="molecule type" value="Genomic_DNA"/>
</dbReference>
<dbReference type="EMBL" id="AY135124">
    <property type="protein sequence ID" value="AAN17621.1"/>
    <property type="molecule type" value="Genomic_DNA"/>
</dbReference>
<dbReference type="EMBL" id="AY135124">
    <property type="protein sequence ID" value="AAN17622.1"/>
    <property type="molecule type" value="Genomic_DNA"/>
</dbReference>
<dbReference type="EMBL" id="AY135125">
    <property type="protein sequence ID" value="AAN17623.1"/>
    <property type="molecule type" value="Genomic_DNA"/>
</dbReference>
<dbReference type="EMBL" id="AY135125">
    <property type="protein sequence ID" value="AAN17624.1"/>
    <property type="molecule type" value="Genomic_DNA"/>
</dbReference>
<dbReference type="EMBL" id="AY135126">
    <property type="protein sequence ID" value="AAN17625.1"/>
    <property type="molecule type" value="Genomic_DNA"/>
</dbReference>
<dbReference type="EMBL" id="AY135126">
    <property type="protein sequence ID" value="AAN17626.1"/>
    <property type="molecule type" value="Genomic_DNA"/>
</dbReference>
<dbReference type="EMBL" id="AY135127">
    <property type="protein sequence ID" value="AAN17627.1"/>
    <property type="molecule type" value="Genomic_DNA"/>
</dbReference>
<dbReference type="EMBL" id="AY135127">
    <property type="protein sequence ID" value="AAN17628.1"/>
    <property type="molecule type" value="Genomic_DNA"/>
</dbReference>
<dbReference type="EMBL" id="AY135128">
    <property type="protein sequence ID" value="AAN17629.1"/>
    <property type="molecule type" value="Genomic_DNA"/>
</dbReference>
<dbReference type="EMBL" id="AY135128">
    <property type="protein sequence ID" value="AAN17630.1"/>
    <property type="molecule type" value="Genomic_DNA"/>
</dbReference>
<dbReference type="EMBL" id="AY135129">
    <property type="protein sequence ID" value="AAN17631.1"/>
    <property type="molecule type" value="Genomic_DNA"/>
</dbReference>
<dbReference type="EMBL" id="AY135129">
    <property type="protein sequence ID" value="AAN17632.1"/>
    <property type="molecule type" value="Genomic_DNA"/>
</dbReference>
<dbReference type="EMBL" id="AY135130">
    <property type="protein sequence ID" value="AAN17633.1"/>
    <property type="molecule type" value="Genomic_DNA"/>
</dbReference>
<dbReference type="EMBL" id="AY135130">
    <property type="protein sequence ID" value="AAN17634.1"/>
    <property type="molecule type" value="Genomic_DNA"/>
</dbReference>
<dbReference type="EMBL" id="AY135131">
    <property type="protein sequence ID" value="AAN17635.1"/>
    <property type="molecule type" value="Genomic_DNA"/>
</dbReference>
<dbReference type="EMBL" id="AY135131">
    <property type="protein sequence ID" value="AAN17636.1"/>
    <property type="molecule type" value="Genomic_DNA"/>
</dbReference>
<dbReference type="EMBL" id="AY135132">
    <property type="protein sequence ID" value="AAN17637.1"/>
    <property type="molecule type" value="Genomic_DNA"/>
</dbReference>
<dbReference type="EMBL" id="AY135132">
    <property type="protein sequence ID" value="AAN17638.1"/>
    <property type="molecule type" value="Genomic_DNA"/>
</dbReference>
<dbReference type="EMBL" id="AY135133">
    <property type="protein sequence ID" value="AAN17639.1"/>
    <property type="molecule type" value="Genomic_DNA"/>
</dbReference>
<dbReference type="EMBL" id="AY135133">
    <property type="protein sequence ID" value="AAN17640.1"/>
    <property type="molecule type" value="Genomic_DNA"/>
</dbReference>
<dbReference type="EMBL" id="AY135134">
    <property type="protein sequence ID" value="AAN17641.1"/>
    <property type="molecule type" value="Genomic_DNA"/>
</dbReference>
<dbReference type="EMBL" id="AY135134">
    <property type="protein sequence ID" value="AAN17642.1"/>
    <property type="molecule type" value="Genomic_DNA"/>
</dbReference>
<dbReference type="EMBL" id="AE014298">
    <property type="protein sequence ID" value="AAF45724.2"/>
    <property type="molecule type" value="Genomic_DNA"/>
</dbReference>
<dbReference type="EMBL" id="AE014298">
    <property type="protein sequence ID" value="AAG22389.2"/>
    <property type="molecule type" value="Genomic_DNA"/>
</dbReference>
<dbReference type="EMBL" id="AE014298">
    <property type="protein sequence ID" value="AAF45725.1"/>
    <property type="molecule type" value="Genomic_DNA"/>
</dbReference>
<dbReference type="EMBL" id="AL132797">
    <property type="protein sequence ID" value="CAB65870.1"/>
    <property type="molecule type" value="Genomic_DNA"/>
</dbReference>
<dbReference type="EMBL" id="AL132797">
    <property type="protein sequence ID" value="CAB65871.1"/>
    <property type="molecule type" value="Genomic_DNA"/>
</dbReference>
<dbReference type="EMBL" id="BT001484">
    <property type="protein sequence ID" value="AAN71239.1"/>
    <property type="molecule type" value="mRNA"/>
</dbReference>
<dbReference type="PIR" id="A43254">
    <property type="entry name" value="A43254"/>
</dbReference>
<dbReference type="RefSeq" id="NP_477130.1">
    <molecule id="P29349-2"/>
    <property type="nucleotide sequence ID" value="NM_057782.5"/>
</dbReference>
<dbReference type="RefSeq" id="NP_477131.1">
    <molecule id="P29349-4"/>
    <property type="nucleotide sequence ID" value="NM_057783.3"/>
</dbReference>
<dbReference type="RefSeq" id="NP_726793.1">
    <molecule id="P29349-3"/>
    <property type="nucleotide sequence ID" value="NM_166928.2"/>
</dbReference>
<dbReference type="SMR" id="P29349"/>
<dbReference type="BioGRID" id="69557">
    <property type="interactions" value="67"/>
</dbReference>
<dbReference type="FunCoup" id="P29349">
    <property type="interactions" value="1568"/>
</dbReference>
<dbReference type="IntAct" id="P29349">
    <property type="interactions" value="3"/>
</dbReference>
<dbReference type="STRING" id="7227.FBpp0070363"/>
<dbReference type="iPTMnet" id="P29349"/>
<dbReference type="PaxDb" id="7227-FBpp0070363"/>
<dbReference type="DNASU" id="45278"/>
<dbReference type="EnsemblMetazoa" id="FBtr0070378">
    <molecule id="P29349-2"/>
    <property type="protein sequence ID" value="FBpp0070362"/>
    <property type="gene ID" value="FBgn0000382"/>
</dbReference>
<dbReference type="EnsemblMetazoa" id="FBtr0070379">
    <molecule id="P29349-4"/>
    <property type="protein sequence ID" value="FBpp0070363"/>
    <property type="gene ID" value="FBgn0000382"/>
</dbReference>
<dbReference type="EnsemblMetazoa" id="FBtr0070380">
    <molecule id="P29349-3"/>
    <property type="protein sequence ID" value="FBpp0070364"/>
    <property type="gene ID" value="FBgn0000382"/>
</dbReference>
<dbReference type="GeneID" id="45278"/>
<dbReference type="KEGG" id="dme:Dmel_CG3954"/>
<dbReference type="AGR" id="FB:FBgn0000382"/>
<dbReference type="CTD" id="45278"/>
<dbReference type="FlyBase" id="FBgn0000382">
    <property type="gene designation" value="csw"/>
</dbReference>
<dbReference type="VEuPathDB" id="VectorBase:FBgn0000382"/>
<dbReference type="eggNOG" id="KOG0790">
    <property type="taxonomic scope" value="Eukaryota"/>
</dbReference>
<dbReference type="GeneTree" id="ENSGT00940000167235"/>
<dbReference type="HOGENOM" id="CLU_001645_9_10_1"/>
<dbReference type="InParanoid" id="P29349"/>
<dbReference type="OrthoDB" id="8815311at2759"/>
<dbReference type="PhylomeDB" id="P29349"/>
<dbReference type="Reactome" id="R-DME-6798695">
    <property type="pathway name" value="Neutrophil degranulation"/>
</dbReference>
<dbReference type="SignaLink" id="P29349"/>
<dbReference type="BioGRID-ORCS" id="45278">
    <property type="hits" value="2 hits in 3 CRISPR screens"/>
</dbReference>
<dbReference type="GenomeRNAi" id="45278"/>
<dbReference type="PRO" id="PR:P29349"/>
<dbReference type="Proteomes" id="UP000000803">
    <property type="component" value="Chromosome X"/>
</dbReference>
<dbReference type="Bgee" id="FBgn0000382">
    <property type="expression patterns" value="Expressed in epithelial cell in antenna and 279 other cell types or tissues"/>
</dbReference>
<dbReference type="ExpressionAtlas" id="P29349">
    <property type="expression patterns" value="baseline and differential"/>
</dbReference>
<dbReference type="GO" id="GO:0005737">
    <property type="term" value="C:cytoplasm"/>
    <property type="evidence" value="ECO:0000318"/>
    <property type="project" value="GO_Central"/>
</dbReference>
<dbReference type="GO" id="GO:0004726">
    <property type="term" value="F:non-membrane spanning protein tyrosine phosphatase activity"/>
    <property type="evidence" value="ECO:0000314"/>
    <property type="project" value="FlyBase"/>
</dbReference>
<dbReference type="GO" id="GO:0001784">
    <property type="term" value="F:phosphotyrosine residue binding"/>
    <property type="evidence" value="ECO:0000353"/>
    <property type="project" value="FlyBase"/>
</dbReference>
<dbReference type="GO" id="GO:0005068">
    <property type="term" value="F:transmembrane receptor protein tyrosine kinase adaptor activity"/>
    <property type="evidence" value="ECO:0000353"/>
    <property type="project" value="FlyBase"/>
</dbReference>
<dbReference type="GO" id="GO:0030154">
    <property type="term" value="P:cell differentiation"/>
    <property type="evidence" value="ECO:0000318"/>
    <property type="project" value="GO_Central"/>
</dbReference>
<dbReference type="GO" id="GO:0008069">
    <property type="term" value="P:dorsal/ventral axis specification, ovarian follicular epithelium"/>
    <property type="evidence" value="ECO:0000315"/>
    <property type="project" value="FlyBase"/>
</dbReference>
<dbReference type="GO" id="GO:0007173">
    <property type="term" value="P:epidermal growth factor receptor signaling pathway"/>
    <property type="evidence" value="ECO:0000315"/>
    <property type="project" value="FlyBase"/>
</dbReference>
<dbReference type="GO" id="GO:0007427">
    <property type="term" value="P:epithelial cell migration, open tracheal system"/>
    <property type="evidence" value="ECO:0000315"/>
    <property type="project" value="FlyBase"/>
</dbReference>
<dbReference type="GO" id="GO:0008543">
    <property type="term" value="P:fibroblast growth factor receptor signaling pathway"/>
    <property type="evidence" value="ECO:0000314"/>
    <property type="project" value="FlyBase"/>
</dbReference>
<dbReference type="GO" id="GO:0007444">
    <property type="term" value="P:imaginal disc development"/>
    <property type="evidence" value="ECO:0000315"/>
    <property type="project" value="FlyBase"/>
</dbReference>
<dbReference type="GO" id="GO:0000165">
    <property type="term" value="P:MAPK cascade"/>
    <property type="evidence" value="ECO:0000318"/>
    <property type="project" value="GO_Central"/>
</dbReference>
<dbReference type="GO" id="GO:0007498">
    <property type="term" value="P:mesoderm development"/>
    <property type="evidence" value="ECO:0000315"/>
    <property type="project" value="FlyBase"/>
</dbReference>
<dbReference type="GO" id="GO:0000278">
    <property type="term" value="P:mitotic cell cycle"/>
    <property type="evidence" value="ECO:0000315"/>
    <property type="project" value="FlyBase"/>
</dbReference>
<dbReference type="GO" id="GO:0007424">
    <property type="term" value="P:open tracheal system development"/>
    <property type="evidence" value="ECO:0000316"/>
    <property type="project" value="FlyBase"/>
</dbReference>
<dbReference type="GO" id="GO:0006911">
    <property type="term" value="P:phagocytosis, engulfment"/>
    <property type="evidence" value="ECO:0000315"/>
    <property type="project" value="FlyBase"/>
</dbReference>
<dbReference type="GO" id="GO:0042461">
    <property type="term" value="P:photoreceptor cell development"/>
    <property type="evidence" value="ECO:0000315"/>
    <property type="project" value="FlyBase"/>
</dbReference>
<dbReference type="GO" id="GO:0007465">
    <property type="term" value="P:R7 cell fate commitment"/>
    <property type="evidence" value="ECO:0000316"/>
    <property type="project" value="FlyBase"/>
</dbReference>
<dbReference type="GO" id="GO:0045314">
    <property type="term" value="P:regulation of compound eye photoreceptor development"/>
    <property type="evidence" value="ECO:0000315"/>
    <property type="project" value="FlyBase"/>
</dbReference>
<dbReference type="GO" id="GO:0045500">
    <property type="term" value="P:sevenless signaling pathway"/>
    <property type="evidence" value="ECO:0000314"/>
    <property type="project" value="FlyBase"/>
</dbReference>
<dbReference type="GO" id="GO:0007362">
    <property type="term" value="P:terminal region determination"/>
    <property type="evidence" value="ECO:0000315"/>
    <property type="project" value="UniProtKB"/>
</dbReference>
<dbReference type="GO" id="GO:0008293">
    <property type="term" value="P:torso signaling pathway"/>
    <property type="evidence" value="ECO:0000315"/>
    <property type="project" value="FlyBase"/>
</dbReference>
<dbReference type="GO" id="GO:0007418">
    <property type="term" value="P:ventral midline development"/>
    <property type="evidence" value="ECO:0000315"/>
    <property type="project" value="FlyBase"/>
</dbReference>
<dbReference type="CDD" id="cd14544">
    <property type="entry name" value="PTPc-N11_6"/>
    <property type="match status" value="1"/>
</dbReference>
<dbReference type="CDD" id="cd09931">
    <property type="entry name" value="SH2_C-SH2_SHP_like"/>
    <property type="match status" value="1"/>
</dbReference>
<dbReference type="CDD" id="cd10340">
    <property type="entry name" value="SH2_N-SH2_SHP_like"/>
    <property type="match status" value="1"/>
</dbReference>
<dbReference type="FunFam" id="3.90.190.10:FF:000121">
    <property type="entry name" value="Corkscrew, isoform D"/>
    <property type="match status" value="1"/>
</dbReference>
<dbReference type="FunFam" id="3.30.505.10:FF:000012">
    <property type="entry name" value="Tyrosine-protein phosphatase non-receptor type"/>
    <property type="match status" value="1"/>
</dbReference>
<dbReference type="FunFam" id="3.30.505.10:FF:000018">
    <property type="entry name" value="Tyrosine-protein phosphatase non-receptor type"/>
    <property type="match status" value="1"/>
</dbReference>
<dbReference type="FunFam" id="3.90.190.10:FF:000119">
    <property type="entry name" value="Tyrosine-protein phosphatase non-receptor type"/>
    <property type="match status" value="1"/>
</dbReference>
<dbReference type="Gene3D" id="3.90.190.10">
    <property type="entry name" value="Protein tyrosine phosphatase superfamily"/>
    <property type="match status" value="2"/>
</dbReference>
<dbReference type="Gene3D" id="3.30.505.10">
    <property type="entry name" value="SH2 domain"/>
    <property type="match status" value="2"/>
</dbReference>
<dbReference type="InterPro" id="IPR052123">
    <property type="entry name" value="Non-rcpt_Tyr_Phosphatase"/>
</dbReference>
<dbReference type="InterPro" id="IPR029021">
    <property type="entry name" value="Prot-tyrosine_phosphatase-like"/>
</dbReference>
<dbReference type="InterPro" id="IPR000242">
    <property type="entry name" value="PTP_cat"/>
</dbReference>
<dbReference type="InterPro" id="IPR000980">
    <property type="entry name" value="SH2"/>
</dbReference>
<dbReference type="InterPro" id="IPR036860">
    <property type="entry name" value="SH2_dom_sf"/>
</dbReference>
<dbReference type="InterPro" id="IPR016130">
    <property type="entry name" value="Tyr_Pase_AS"/>
</dbReference>
<dbReference type="InterPro" id="IPR003595">
    <property type="entry name" value="Tyr_Pase_cat"/>
</dbReference>
<dbReference type="InterPro" id="IPR000387">
    <property type="entry name" value="Tyr_Pase_dom"/>
</dbReference>
<dbReference type="PANTHER" id="PTHR46257">
    <property type="entry name" value="TYROSINE-PROTEIN PHOSPHATASE CORKSCREW"/>
    <property type="match status" value="1"/>
</dbReference>
<dbReference type="PANTHER" id="PTHR46257:SF3">
    <property type="entry name" value="TYROSINE-PROTEIN PHOSPHATASE CORKSCREW"/>
    <property type="match status" value="1"/>
</dbReference>
<dbReference type="Pfam" id="PF00017">
    <property type="entry name" value="SH2"/>
    <property type="match status" value="2"/>
</dbReference>
<dbReference type="Pfam" id="PF00102">
    <property type="entry name" value="Y_phosphatase"/>
    <property type="match status" value="2"/>
</dbReference>
<dbReference type="PRINTS" id="PR00700">
    <property type="entry name" value="PRTYPHPHTASE"/>
</dbReference>
<dbReference type="PRINTS" id="PR00401">
    <property type="entry name" value="SH2DOMAIN"/>
</dbReference>
<dbReference type="SMART" id="SM00194">
    <property type="entry name" value="PTPc"/>
    <property type="match status" value="1"/>
</dbReference>
<dbReference type="SMART" id="SM00404">
    <property type="entry name" value="PTPc_motif"/>
    <property type="match status" value="1"/>
</dbReference>
<dbReference type="SMART" id="SM00252">
    <property type="entry name" value="SH2"/>
    <property type="match status" value="2"/>
</dbReference>
<dbReference type="SUPFAM" id="SSF52799">
    <property type="entry name" value="(Phosphotyrosine protein) phosphatases II"/>
    <property type="match status" value="1"/>
</dbReference>
<dbReference type="SUPFAM" id="SSF55550">
    <property type="entry name" value="SH2 domain"/>
    <property type="match status" value="2"/>
</dbReference>
<dbReference type="PROSITE" id="PS50001">
    <property type="entry name" value="SH2"/>
    <property type="match status" value="2"/>
</dbReference>
<dbReference type="PROSITE" id="PS00383">
    <property type="entry name" value="TYR_PHOSPHATASE_1"/>
    <property type="match status" value="1"/>
</dbReference>
<dbReference type="PROSITE" id="PS50056">
    <property type="entry name" value="TYR_PHOSPHATASE_2"/>
    <property type="match status" value="1"/>
</dbReference>
<dbReference type="PROSITE" id="PS50055">
    <property type="entry name" value="TYR_PHOSPHATASE_PTP"/>
    <property type="match status" value="1"/>
</dbReference>
<reference key="1">
    <citation type="journal article" date="1992" name="Cell">
        <title>Corkscrew encodes a putative protein tyrosine phosphatase that functions to transduce the terminal signal from the receptor tyrosine kinase torso.</title>
        <authorList>
            <person name="Perkins L.A."/>
            <person name="Larsen I."/>
            <person name="Perrimon N."/>
        </authorList>
    </citation>
    <scope>NUCLEOTIDE SEQUENCE [MRNA] (ISOFORM 1)</scope>
    <scope>FUNCTION</scope>
    <scope>TISSUE SPECIFICITY</scope>
    <scope>DEVELOPMENTAL STAGE</scope>
    <source>
        <tissue>Embryo</tissue>
    </source>
</reference>
<reference key="2">
    <citation type="submission" date="1995-01" db="EMBL/GenBank/DDBJ databases">
        <title>The role of the Drosophila corkscrew protein as a transducer downstream of receptor tyrosine kinases is functionally conserved.</title>
        <authorList>
            <person name="Melnick M.B."/>
            <person name="Melnick C.B."/>
            <person name="Larsen I."/>
            <person name="Perrimon N."/>
            <person name="Perkins L.A."/>
        </authorList>
    </citation>
    <scope>NUCLEOTIDE SEQUENCE (ISOFORMS 1 AND 4)</scope>
    <source>
        <strain>DP CN BW</strain>
    </source>
</reference>
<reference key="3">
    <citation type="journal article" date="2003" name="Mol. Ecol.">
        <title>Contrasting selection pressures on components of the Ras-mediated signal transduction pathway in Drosophila.</title>
        <authorList>
            <person name="Riley R.M."/>
            <person name="Jin W."/>
            <person name="Gibson G."/>
        </authorList>
    </citation>
    <scope>NUCLEOTIDE SEQUENCE (ISOFORMS 2 AND 4)</scope>
    <scope>VARIANTS THR-119 AND SER-749</scope>
    <source>
        <strain>10A</strain>
        <strain>Ann Arbor1</strain>
        <strain>Ann Arbor20</strain>
        <strain>Ann Arbor3</strain>
        <strain>Ann Arbor6</strain>
        <strain>Kakamega-b1</strain>
        <strain>Kakamega-b3</strain>
        <strain>Kakamega-b4</strain>
        <strain>Kenya-HLa3</strain>
        <strain>Kenya-HLa6</strain>
        <strain>Kenya-HLb1</strain>
        <strain>M2</strain>
        <strain>Makindu-b1</strain>
        <strain>Makindu-b5</strain>
        <strain>Nairobi-a</strain>
        <strain>PYR2</strain>
        <strain>Reids2</strain>
        <strain>Sapporo</strain>
    </source>
</reference>
<reference key="4">
    <citation type="journal article" date="2000" name="Science">
        <title>The genome sequence of Drosophila melanogaster.</title>
        <authorList>
            <person name="Adams M.D."/>
            <person name="Celniker S.E."/>
            <person name="Holt R.A."/>
            <person name="Evans C.A."/>
            <person name="Gocayne J.D."/>
            <person name="Amanatides P.G."/>
            <person name="Scherer S.E."/>
            <person name="Li P.W."/>
            <person name="Hoskins R.A."/>
            <person name="Galle R.F."/>
            <person name="George R.A."/>
            <person name="Lewis S.E."/>
            <person name="Richards S."/>
            <person name="Ashburner M."/>
            <person name="Henderson S.N."/>
            <person name="Sutton G.G."/>
            <person name="Wortman J.R."/>
            <person name="Yandell M.D."/>
            <person name="Zhang Q."/>
            <person name="Chen L.X."/>
            <person name="Brandon R.C."/>
            <person name="Rogers Y.-H.C."/>
            <person name="Blazej R.G."/>
            <person name="Champe M."/>
            <person name="Pfeiffer B.D."/>
            <person name="Wan K.H."/>
            <person name="Doyle C."/>
            <person name="Baxter E.G."/>
            <person name="Helt G."/>
            <person name="Nelson C.R."/>
            <person name="Miklos G.L.G."/>
            <person name="Abril J.F."/>
            <person name="Agbayani A."/>
            <person name="An H.-J."/>
            <person name="Andrews-Pfannkoch C."/>
            <person name="Baldwin D."/>
            <person name="Ballew R.M."/>
            <person name="Basu A."/>
            <person name="Baxendale J."/>
            <person name="Bayraktaroglu L."/>
            <person name="Beasley E.M."/>
            <person name="Beeson K.Y."/>
            <person name="Benos P.V."/>
            <person name="Berman B.P."/>
            <person name="Bhandari D."/>
            <person name="Bolshakov S."/>
            <person name="Borkova D."/>
            <person name="Botchan M.R."/>
            <person name="Bouck J."/>
            <person name="Brokstein P."/>
            <person name="Brottier P."/>
            <person name="Burtis K.C."/>
            <person name="Busam D.A."/>
            <person name="Butler H."/>
            <person name="Cadieu E."/>
            <person name="Center A."/>
            <person name="Chandra I."/>
            <person name="Cherry J.M."/>
            <person name="Cawley S."/>
            <person name="Dahlke C."/>
            <person name="Davenport L.B."/>
            <person name="Davies P."/>
            <person name="de Pablos B."/>
            <person name="Delcher A."/>
            <person name="Deng Z."/>
            <person name="Mays A.D."/>
            <person name="Dew I."/>
            <person name="Dietz S.M."/>
            <person name="Dodson K."/>
            <person name="Doup L.E."/>
            <person name="Downes M."/>
            <person name="Dugan-Rocha S."/>
            <person name="Dunkov B.C."/>
            <person name="Dunn P."/>
            <person name="Durbin K.J."/>
            <person name="Evangelista C.C."/>
            <person name="Ferraz C."/>
            <person name="Ferriera S."/>
            <person name="Fleischmann W."/>
            <person name="Fosler C."/>
            <person name="Gabrielian A.E."/>
            <person name="Garg N.S."/>
            <person name="Gelbart W.M."/>
            <person name="Glasser K."/>
            <person name="Glodek A."/>
            <person name="Gong F."/>
            <person name="Gorrell J.H."/>
            <person name="Gu Z."/>
            <person name="Guan P."/>
            <person name="Harris M."/>
            <person name="Harris N.L."/>
            <person name="Harvey D.A."/>
            <person name="Heiman T.J."/>
            <person name="Hernandez J.R."/>
            <person name="Houck J."/>
            <person name="Hostin D."/>
            <person name="Houston K.A."/>
            <person name="Howland T.J."/>
            <person name="Wei M.-H."/>
            <person name="Ibegwam C."/>
            <person name="Jalali M."/>
            <person name="Kalush F."/>
            <person name="Karpen G.H."/>
            <person name="Ke Z."/>
            <person name="Kennison J.A."/>
            <person name="Ketchum K.A."/>
            <person name="Kimmel B.E."/>
            <person name="Kodira C.D."/>
            <person name="Kraft C.L."/>
            <person name="Kravitz S."/>
            <person name="Kulp D."/>
            <person name="Lai Z."/>
            <person name="Lasko P."/>
            <person name="Lei Y."/>
            <person name="Levitsky A.A."/>
            <person name="Li J.H."/>
            <person name="Li Z."/>
            <person name="Liang Y."/>
            <person name="Lin X."/>
            <person name="Liu X."/>
            <person name="Mattei B."/>
            <person name="McIntosh T.C."/>
            <person name="McLeod M.P."/>
            <person name="McPherson D."/>
            <person name="Merkulov G."/>
            <person name="Milshina N.V."/>
            <person name="Mobarry C."/>
            <person name="Morris J."/>
            <person name="Moshrefi A."/>
            <person name="Mount S.M."/>
            <person name="Moy M."/>
            <person name="Murphy B."/>
            <person name="Murphy L."/>
            <person name="Muzny D.M."/>
            <person name="Nelson D.L."/>
            <person name="Nelson D.R."/>
            <person name="Nelson K.A."/>
            <person name="Nixon K."/>
            <person name="Nusskern D.R."/>
            <person name="Pacleb J.M."/>
            <person name="Palazzolo M."/>
            <person name="Pittman G.S."/>
            <person name="Pan S."/>
            <person name="Pollard J."/>
            <person name="Puri V."/>
            <person name="Reese M.G."/>
            <person name="Reinert K."/>
            <person name="Remington K."/>
            <person name="Saunders R.D.C."/>
            <person name="Scheeler F."/>
            <person name="Shen H."/>
            <person name="Shue B.C."/>
            <person name="Siden-Kiamos I."/>
            <person name="Simpson M."/>
            <person name="Skupski M.P."/>
            <person name="Smith T.J."/>
            <person name="Spier E."/>
            <person name="Spradling A.C."/>
            <person name="Stapleton M."/>
            <person name="Strong R."/>
            <person name="Sun E."/>
            <person name="Svirskas R."/>
            <person name="Tector C."/>
            <person name="Turner R."/>
            <person name="Venter E."/>
            <person name="Wang A.H."/>
            <person name="Wang X."/>
            <person name="Wang Z.-Y."/>
            <person name="Wassarman D.A."/>
            <person name="Weinstock G.M."/>
            <person name="Weissenbach J."/>
            <person name="Williams S.M."/>
            <person name="Woodage T."/>
            <person name="Worley K.C."/>
            <person name="Wu D."/>
            <person name="Yang S."/>
            <person name="Yao Q.A."/>
            <person name="Ye J."/>
            <person name="Yeh R.-F."/>
            <person name="Zaveri J.S."/>
            <person name="Zhan M."/>
            <person name="Zhang G."/>
            <person name="Zhao Q."/>
            <person name="Zheng L."/>
            <person name="Zheng X.H."/>
            <person name="Zhong F.N."/>
            <person name="Zhong W."/>
            <person name="Zhou X."/>
            <person name="Zhu S.C."/>
            <person name="Zhu X."/>
            <person name="Smith H.O."/>
            <person name="Gibbs R.A."/>
            <person name="Myers E.W."/>
            <person name="Rubin G.M."/>
            <person name="Venter J.C."/>
        </authorList>
    </citation>
    <scope>NUCLEOTIDE SEQUENCE [LARGE SCALE GENOMIC DNA] (ISOFORMS 1; 2 AND 4)</scope>
    <source>
        <strain>Berkeley</strain>
    </source>
</reference>
<reference key="5">
    <citation type="journal article" date="2002" name="Genome Biol.">
        <title>Annotation of the Drosophila melanogaster euchromatic genome: a systematic review.</title>
        <authorList>
            <person name="Misra S."/>
            <person name="Crosby M.A."/>
            <person name="Mungall C.J."/>
            <person name="Matthews B.B."/>
            <person name="Campbell K.S."/>
            <person name="Hradecky P."/>
            <person name="Huang Y."/>
            <person name="Kaminker J.S."/>
            <person name="Millburn G.H."/>
            <person name="Prochnik S.E."/>
            <person name="Smith C.D."/>
            <person name="Tupy J.L."/>
            <person name="Whitfield E.J."/>
            <person name="Bayraktaroglu L."/>
            <person name="Berman B.P."/>
            <person name="Bettencourt B.R."/>
            <person name="Celniker S.E."/>
            <person name="de Grey A.D.N.J."/>
            <person name="Drysdale R.A."/>
            <person name="Harris N.L."/>
            <person name="Richter J."/>
            <person name="Russo S."/>
            <person name="Schroeder A.J."/>
            <person name="Shu S.Q."/>
            <person name="Stapleton M."/>
            <person name="Yamada C."/>
            <person name="Ashburner M."/>
            <person name="Gelbart W.M."/>
            <person name="Rubin G.M."/>
            <person name="Lewis S.E."/>
        </authorList>
    </citation>
    <scope>GENOME REANNOTATION</scope>
    <scope>ALTERNATIVE SPLICING</scope>
    <source>
        <strain>Berkeley</strain>
    </source>
</reference>
<reference key="6">
    <citation type="journal article" date="2000" name="Science">
        <title>From sequence to chromosome: the tip of the X chromosome of D. melanogaster.</title>
        <authorList>
            <person name="Benos P.V."/>
            <person name="Gatt M.K."/>
            <person name="Ashburner M."/>
            <person name="Murphy L."/>
            <person name="Harris D."/>
            <person name="Barrell B.G."/>
            <person name="Ferraz C."/>
            <person name="Vidal S."/>
            <person name="Brun C."/>
            <person name="Demailles J."/>
            <person name="Cadieu E."/>
            <person name="Dreano S."/>
            <person name="Gloux S."/>
            <person name="Lelaure V."/>
            <person name="Mottier S."/>
            <person name="Galibert F."/>
            <person name="Borkova D."/>
            <person name="Minana B."/>
            <person name="Kafatos F.C."/>
            <person name="Louis C."/>
            <person name="Siden-Kiamos I."/>
            <person name="Bolshakov S."/>
            <person name="Papagiannakis G."/>
            <person name="Spanos L."/>
            <person name="Cox S."/>
            <person name="Madueno E."/>
            <person name="de Pablos B."/>
            <person name="Modolell J."/>
            <person name="Peter A."/>
            <person name="Schoettler P."/>
            <person name="Werner M."/>
            <person name="Mourkioti F."/>
            <person name="Beinert N."/>
            <person name="Dowe G."/>
            <person name="Schaefer U."/>
            <person name="Jaeckle H."/>
            <person name="Bucheton A."/>
            <person name="Callister D.M."/>
            <person name="Campbell L.A."/>
            <person name="Darlamitsou A."/>
            <person name="Henderson N.S."/>
            <person name="McMillan P.J."/>
            <person name="Salles C."/>
            <person name="Tait E.A."/>
            <person name="Valenti P."/>
            <person name="Saunders R.D.C."/>
            <person name="Glover D.M."/>
        </authorList>
    </citation>
    <scope>NUCLEOTIDE SEQUENCE [LARGE SCALE GENOMIC DNA] (ISOFORMS 1 AND 4)</scope>
    <source>
        <strain>Oregon-R</strain>
    </source>
</reference>
<reference key="7">
    <citation type="journal article" date="2002" name="Genome Biol.">
        <title>A Drosophila full-length cDNA resource.</title>
        <authorList>
            <person name="Stapleton M."/>
            <person name="Carlson J.W."/>
            <person name="Brokstein P."/>
            <person name="Yu C."/>
            <person name="Champe M."/>
            <person name="George R.A."/>
            <person name="Guarin H."/>
            <person name="Kronmiller B."/>
            <person name="Pacleb J.M."/>
            <person name="Park S."/>
            <person name="Wan K.H."/>
            <person name="Rubin G.M."/>
            <person name="Celniker S.E."/>
        </authorList>
    </citation>
    <scope>NUCLEOTIDE SEQUENCE [LARGE SCALE MRNA] (ISOFORM 1)</scope>
    <source>
        <strain>Berkeley</strain>
        <tissue>Ovary</tissue>
    </source>
</reference>
<reference key="8">
    <citation type="journal article" date="1996" name="Dev. Biol.">
        <title>The nonreceptor protein tyrosine phosphatase corkscrew functions in multiple receptor tyrosine kinase pathways in Drosophila.</title>
        <authorList>
            <person name="Perkins L.A."/>
            <person name="Johnson M.R."/>
            <person name="Melnick M.B."/>
            <person name="Perrimon N."/>
        </authorList>
    </citation>
    <scope>FUNCTION</scope>
</reference>
<reference key="9">
    <citation type="journal article" date="2008" name="J. Proteome Res.">
        <title>Phosphoproteome analysis of Drosophila melanogaster embryos.</title>
        <authorList>
            <person name="Zhai B."/>
            <person name="Villen J."/>
            <person name="Beausoleil S.A."/>
            <person name="Mintseris J."/>
            <person name="Gygi S.P."/>
        </authorList>
    </citation>
    <scope>PHOSPHORYLATION [LARGE SCALE ANALYSIS] AT SER-419</scope>
    <scope>IDENTIFICATION BY MASS SPECTROMETRY</scope>
    <source>
        <tissue>Embryo</tissue>
    </source>
</reference>
<reference key="10">
    <citation type="journal article" date="2012" name="Nat. Neurosci.">
        <title>Negative regulation of glial engulfment activity by Draper terminates glial responses to axon injury.</title>
        <authorList>
            <person name="Logan M.A."/>
            <person name="Hackett R."/>
            <person name="Doherty J."/>
            <person name="Sheehan A."/>
            <person name="Speese S.D."/>
            <person name="Freeman M.R."/>
        </authorList>
    </citation>
    <scope>FUNCTION</scope>
    <scope>INTERACTION WITH DRPR</scope>
    <scope>DISRUPTION PHENOTYPE</scope>
</reference>
<keyword id="KW-0025">Alternative splicing</keyword>
<keyword id="KW-0963">Cytoplasm</keyword>
<keyword id="KW-0217">Developmental protein</keyword>
<keyword id="KW-0378">Hydrolase</keyword>
<keyword id="KW-0597">Phosphoprotein</keyword>
<keyword id="KW-0904">Protein phosphatase</keyword>
<keyword id="KW-1185">Reference proteome</keyword>
<keyword id="KW-0677">Repeat</keyword>
<keyword id="KW-0727">SH2 domain</keyword>
<proteinExistence type="evidence at protein level"/>
<gene>
    <name type="primary">csw</name>
    <name type="ORF">CG3954</name>
</gene>
<comment type="function">
    <text evidence="7 9 10">Required in all receptor tyrosine kinase signaling pathways. Functions downstream of the receptor tyrosine kinase torso, acting in concert with D-Raf via tailless. Also functions downstream of Egfr (epidermal growth factor receptor) and btl (fibroblast growth factor receptor). The SH2 domain suggests that csw effects its role by mediating heteromeric protein interactions. Maternally required for normal determination of cell fates at the termini of the embryo. Required for cell fate specification of the ventral ectoderm, in the developing embryonic CNS and for embryonic tracheal cell migration. Functions during imaginal development for proper formation of adult structures such as eyes, aristae, L5 wing vein and the tarsal claw. Dephosphorylates drpr isoform A which is required for the inhibition by drpr isoform A of glial cell engulfment of axonal debris produced following axonal injury (PubMed:22426252).</text>
</comment>
<comment type="catalytic activity">
    <reaction evidence="4">
        <text>O-phospho-L-tyrosyl-[protein] + H2O = L-tyrosyl-[protein] + phosphate</text>
        <dbReference type="Rhea" id="RHEA:10684"/>
        <dbReference type="Rhea" id="RHEA-COMP:10136"/>
        <dbReference type="Rhea" id="RHEA-COMP:20101"/>
        <dbReference type="ChEBI" id="CHEBI:15377"/>
        <dbReference type="ChEBI" id="CHEBI:43474"/>
        <dbReference type="ChEBI" id="CHEBI:46858"/>
        <dbReference type="ChEBI" id="CHEBI:61978"/>
        <dbReference type="EC" id="3.1.3.48"/>
    </reaction>
</comment>
<comment type="subunit">
    <text evidence="9">Interacts with drpr isoform A.</text>
</comment>
<comment type="subcellular location">
    <subcellularLocation>
        <location>Cytoplasm</location>
    </subcellularLocation>
</comment>
<comment type="alternative products">
    <event type="alternative splicing"/>
    <isoform>
        <id>P29349-1</id>
        <name>2</name>
        <sequence type="displayed"/>
    </isoform>
    <isoform>
        <id>P29349-2</id>
        <name>1</name>
        <name>Y1229</name>
        <name>A</name>
        <sequence type="described" ref="VSP_005141"/>
    </isoform>
    <isoform>
        <id>P29349-3</id>
        <name>3</name>
        <name>C</name>
        <sequence type="described" ref="VSP_005139 VSP_005141"/>
    </isoform>
    <isoform>
        <id>P29349-4</id>
        <name>4</name>
        <name>4A</name>
        <name>B</name>
        <sequence type="described" ref="VSP_005140"/>
    </isoform>
    <text>Experimental confirmation may be lacking for some isoforms.</text>
</comment>
<comment type="tissue specificity">
    <text evidence="7">Expressed uniformly throughout all tissues during embryogenesis.</text>
</comment>
<comment type="developmental stage">
    <text evidence="7">Expressed throughout development.</text>
</comment>
<comment type="disruption phenotype">
    <text evidence="9">RNAi-mediated knockdown in glia results in significantly reduced inhibitory activity of drpr isoform A on glial cell engulfment of axonal debris.</text>
</comment>
<comment type="miscellaneous">
    <text>The PTPase domain is interrupted by a PTPase insert which shares no homologies with other PTPase proteins. This PTPase insert is reminiscent of the kinase insert within the kinase catalytic domains of several receptor tyrosine kinases.</text>
</comment>
<comment type="similarity">
    <text evidence="13">Belongs to the protein-tyrosine phosphatase family. Non-receptor class subfamily.</text>
</comment>
<evidence type="ECO:0000250" key="1"/>
<evidence type="ECO:0000255" key="2">
    <source>
        <dbReference type="PROSITE-ProRule" id="PRU00160"/>
    </source>
</evidence>
<evidence type="ECO:0000255" key="3">
    <source>
        <dbReference type="PROSITE-ProRule" id="PRU00191"/>
    </source>
</evidence>
<evidence type="ECO:0000255" key="4">
    <source>
        <dbReference type="PROSITE-ProRule" id="PRU10044"/>
    </source>
</evidence>
<evidence type="ECO:0000256" key="5">
    <source>
        <dbReference type="SAM" id="MobiDB-lite"/>
    </source>
</evidence>
<evidence type="ECO:0000269" key="6">
    <source>
    </source>
</evidence>
<evidence type="ECO:0000269" key="7">
    <source>
    </source>
</evidence>
<evidence type="ECO:0000269" key="8">
    <source>
    </source>
</evidence>
<evidence type="ECO:0000269" key="9">
    <source>
    </source>
</evidence>
<evidence type="ECO:0000269" key="10">
    <source>
    </source>
</evidence>
<evidence type="ECO:0000303" key="11">
    <source>
    </source>
</evidence>
<evidence type="ECO:0000303" key="12">
    <source>
    </source>
</evidence>
<evidence type="ECO:0000305" key="13"/>
<accession>P29349</accession>
<accession>Q24032</accession>
<accession>Q24033</accession>
<accession>Q8I074</accession>
<accession>Q8I0H8</accession>
<accession>Q8I0S4</accession>
<accession>Q8ISD5</accession>
<accession>Q8ISD6</accession>
<accession>Q9V3H1</accession>
<accession>Q9W524</accession>
<organism>
    <name type="scientific">Drosophila melanogaster</name>
    <name type="common">Fruit fly</name>
    <dbReference type="NCBI Taxonomy" id="7227"/>
    <lineage>
        <taxon>Eukaryota</taxon>
        <taxon>Metazoa</taxon>
        <taxon>Ecdysozoa</taxon>
        <taxon>Arthropoda</taxon>
        <taxon>Hexapoda</taxon>
        <taxon>Insecta</taxon>
        <taxon>Pterygota</taxon>
        <taxon>Neoptera</taxon>
        <taxon>Endopterygota</taxon>
        <taxon>Diptera</taxon>
        <taxon>Brachycera</taxon>
        <taxon>Muscomorpha</taxon>
        <taxon>Ephydroidea</taxon>
        <taxon>Drosophilidae</taxon>
        <taxon>Drosophila</taxon>
        <taxon>Sophophora</taxon>
    </lineage>
</organism>